<gene>
    <name evidence="1" type="primary">thrB</name>
    <name type="ordered locus">RSc2233</name>
    <name type="ORF">RS01366</name>
</gene>
<organism>
    <name type="scientific">Ralstonia nicotianae (strain ATCC BAA-1114 / GMI1000)</name>
    <name type="common">Ralstonia solanacearum</name>
    <dbReference type="NCBI Taxonomy" id="267608"/>
    <lineage>
        <taxon>Bacteria</taxon>
        <taxon>Pseudomonadati</taxon>
        <taxon>Pseudomonadota</taxon>
        <taxon>Betaproteobacteria</taxon>
        <taxon>Burkholderiales</taxon>
        <taxon>Burkholderiaceae</taxon>
        <taxon>Ralstonia</taxon>
        <taxon>Ralstonia solanacearum species complex</taxon>
    </lineage>
</organism>
<accession>Q8XX83</accession>
<name>KHSE_RALN1</name>
<dbReference type="EC" id="2.7.1.39" evidence="1"/>
<dbReference type="EMBL" id="AL646052">
    <property type="protein sequence ID" value="CAD15940.1"/>
    <property type="molecule type" value="Genomic_DNA"/>
</dbReference>
<dbReference type="RefSeq" id="WP_011002161.1">
    <property type="nucleotide sequence ID" value="NC_003295.1"/>
</dbReference>
<dbReference type="SMR" id="Q8XX83"/>
<dbReference type="STRING" id="267608.RSc2233"/>
<dbReference type="EnsemblBacteria" id="CAD15940">
    <property type="protein sequence ID" value="CAD15940"/>
    <property type="gene ID" value="RSc2233"/>
</dbReference>
<dbReference type="KEGG" id="rso:RSc2233"/>
<dbReference type="eggNOG" id="COG2334">
    <property type="taxonomic scope" value="Bacteria"/>
</dbReference>
<dbReference type="HOGENOM" id="CLU_053300_0_0_4"/>
<dbReference type="UniPathway" id="UPA00050">
    <property type="reaction ID" value="UER00064"/>
</dbReference>
<dbReference type="Proteomes" id="UP000001436">
    <property type="component" value="Chromosome"/>
</dbReference>
<dbReference type="GO" id="GO:0005524">
    <property type="term" value="F:ATP binding"/>
    <property type="evidence" value="ECO:0007669"/>
    <property type="project" value="UniProtKB-KW"/>
</dbReference>
<dbReference type="GO" id="GO:0004413">
    <property type="term" value="F:homoserine kinase activity"/>
    <property type="evidence" value="ECO:0007669"/>
    <property type="project" value="UniProtKB-UniRule"/>
</dbReference>
<dbReference type="GO" id="GO:0009088">
    <property type="term" value="P:threonine biosynthetic process"/>
    <property type="evidence" value="ECO:0007669"/>
    <property type="project" value="UniProtKB-UniRule"/>
</dbReference>
<dbReference type="CDD" id="cd05153">
    <property type="entry name" value="HomoserineK_II"/>
    <property type="match status" value="1"/>
</dbReference>
<dbReference type="Gene3D" id="3.90.1200.10">
    <property type="match status" value="1"/>
</dbReference>
<dbReference type="Gene3D" id="3.30.200.20">
    <property type="entry name" value="Phosphorylase Kinase, domain 1"/>
    <property type="match status" value="1"/>
</dbReference>
<dbReference type="HAMAP" id="MF_00301">
    <property type="entry name" value="Homoser_kinase_2"/>
    <property type="match status" value="1"/>
</dbReference>
<dbReference type="InterPro" id="IPR002575">
    <property type="entry name" value="Aminoglycoside_PTrfase"/>
</dbReference>
<dbReference type="InterPro" id="IPR005280">
    <property type="entry name" value="Homoserine_kinase_II"/>
</dbReference>
<dbReference type="InterPro" id="IPR011009">
    <property type="entry name" value="Kinase-like_dom_sf"/>
</dbReference>
<dbReference type="InterPro" id="IPR050249">
    <property type="entry name" value="Pseudomonas-type_ThrB"/>
</dbReference>
<dbReference type="NCBIfam" id="NF003558">
    <property type="entry name" value="PRK05231.1"/>
    <property type="match status" value="1"/>
</dbReference>
<dbReference type="NCBIfam" id="TIGR00938">
    <property type="entry name" value="thrB_alt"/>
    <property type="match status" value="1"/>
</dbReference>
<dbReference type="PANTHER" id="PTHR21064:SF6">
    <property type="entry name" value="AMINOGLYCOSIDE PHOSPHOTRANSFERASE DOMAIN-CONTAINING PROTEIN"/>
    <property type="match status" value="1"/>
</dbReference>
<dbReference type="PANTHER" id="PTHR21064">
    <property type="entry name" value="AMINOGLYCOSIDE PHOSPHOTRANSFERASE DOMAIN-CONTAINING PROTEIN-RELATED"/>
    <property type="match status" value="1"/>
</dbReference>
<dbReference type="Pfam" id="PF01636">
    <property type="entry name" value="APH"/>
    <property type="match status" value="1"/>
</dbReference>
<dbReference type="SUPFAM" id="SSF56112">
    <property type="entry name" value="Protein kinase-like (PK-like)"/>
    <property type="match status" value="1"/>
</dbReference>
<reference key="1">
    <citation type="journal article" date="2002" name="Nature">
        <title>Genome sequence of the plant pathogen Ralstonia solanacearum.</title>
        <authorList>
            <person name="Salanoubat M."/>
            <person name="Genin S."/>
            <person name="Artiguenave F."/>
            <person name="Gouzy J."/>
            <person name="Mangenot S."/>
            <person name="Arlat M."/>
            <person name="Billault A."/>
            <person name="Brottier P."/>
            <person name="Camus J.-C."/>
            <person name="Cattolico L."/>
            <person name="Chandler M."/>
            <person name="Choisne N."/>
            <person name="Claudel-Renard C."/>
            <person name="Cunnac S."/>
            <person name="Demange N."/>
            <person name="Gaspin C."/>
            <person name="Lavie M."/>
            <person name="Moisan A."/>
            <person name="Robert C."/>
            <person name="Saurin W."/>
            <person name="Schiex T."/>
            <person name="Siguier P."/>
            <person name="Thebault P."/>
            <person name="Whalen M."/>
            <person name="Wincker P."/>
            <person name="Levy M."/>
            <person name="Weissenbach J."/>
            <person name="Boucher C.A."/>
        </authorList>
    </citation>
    <scope>NUCLEOTIDE SEQUENCE [LARGE SCALE GENOMIC DNA]</scope>
    <source>
        <strain>ATCC BAA-1114 / GMI1000</strain>
    </source>
</reference>
<sequence length="334" mass="37994">MAVFTPVTNAEIALWLEQYDVGTVRALRGIPSGIENTNFFLTTEKDGATHEYVVTLFERLTSEQLPFYLYLMQHLAQHGICVPAPIPGRDGAILRPLKGKPATIVTRLPGRSNLAPTTSECAIVGDMLARMHLAGRDYPRHQPNLRSLPWWNEVVPDIQPFVQGATRELLVAELAHQQRFFGSADYAALPEGPCHCDLFRDNVLFEPATDSQPERLGGFFDFYFAGVDKWLFDVAVTVNDWCVDLATGALDAERMRAMLRAYHAVRPFTDAEARHWRDMLRAAAYRFWVSRLWDFHLPRDAELLQPHDPTHFERVLRERVRAEGLTLDIPEPCN</sequence>
<comment type="catalytic activity">
    <reaction evidence="1">
        <text>L-homoserine + ATP = O-phospho-L-homoserine + ADP + H(+)</text>
        <dbReference type="Rhea" id="RHEA:13985"/>
        <dbReference type="ChEBI" id="CHEBI:15378"/>
        <dbReference type="ChEBI" id="CHEBI:30616"/>
        <dbReference type="ChEBI" id="CHEBI:57476"/>
        <dbReference type="ChEBI" id="CHEBI:57590"/>
        <dbReference type="ChEBI" id="CHEBI:456216"/>
        <dbReference type="EC" id="2.7.1.39"/>
    </reaction>
</comment>
<comment type="pathway">
    <text evidence="1">Amino-acid biosynthesis; L-threonine biosynthesis; L-threonine from L-aspartate: step 4/5.</text>
</comment>
<comment type="similarity">
    <text evidence="1">Belongs to the pseudomonas-type ThrB family.</text>
</comment>
<keyword id="KW-0028">Amino-acid biosynthesis</keyword>
<keyword id="KW-0067">ATP-binding</keyword>
<keyword id="KW-0418">Kinase</keyword>
<keyword id="KW-0547">Nucleotide-binding</keyword>
<keyword id="KW-1185">Reference proteome</keyword>
<keyword id="KW-0791">Threonine biosynthesis</keyword>
<keyword id="KW-0808">Transferase</keyword>
<protein>
    <recommendedName>
        <fullName evidence="1">Homoserine kinase</fullName>
        <shortName evidence="1">HK</shortName>
        <shortName evidence="1">HSK</shortName>
        <ecNumber evidence="1">2.7.1.39</ecNumber>
    </recommendedName>
</protein>
<proteinExistence type="inferred from homology"/>
<evidence type="ECO:0000255" key="1">
    <source>
        <dbReference type="HAMAP-Rule" id="MF_00301"/>
    </source>
</evidence>
<feature type="chain" id="PRO_0000172195" description="Homoserine kinase">
    <location>
        <begin position="1"/>
        <end position="334"/>
    </location>
</feature>